<name>C562_SALTI</name>
<gene>
    <name type="primary">cybC</name>
    <name type="ordered locus">STY4778</name>
    <name type="ordered locus">t4473</name>
</gene>
<feature type="signal peptide" evidence="1">
    <location>
        <begin position="1"/>
        <end position="22"/>
    </location>
</feature>
<feature type="chain" id="PRO_0000003642" description="Soluble cytochrome b562">
    <location>
        <begin position="23"/>
        <end position="128"/>
    </location>
</feature>
<feature type="binding site" description="axial binding residue" evidence="1">
    <location>
        <position position="29"/>
    </location>
    <ligand>
        <name>heme b</name>
        <dbReference type="ChEBI" id="CHEBI:60344"/>
    </ligand>
    <ligandPart>
        <name>Fe</name>
        <dbReference type="ChEBI" id="CHEBI:18248"/>
    </ligandPart>
</feature>
<feature type="binding site" description="axial binding residue" evidence="1">
    <location>
        <position position="124"/>
    </location>
    <ligand>
        <name>heme b</name>
        <dbReference type="ChEBI" id="CHEBI:60344"/>
    </ligand>
    <ligandPart>
        <name>Fe</name>
        <dbReference type="ChEBI" id="CHEBI:18248"/>
    </ligandPart>
</feature>
<evidence type="ECO:0000250" key="1"/>
<evidence type="ECO:0000305" key="2"/>
<accession>P63728</accession>
<accession>Q8XGQ1</accession>
<keyword id="KW-0249">Electron transport</keyword>
<keyword id="KW-0349">Heme</keyword>
<keyword id="KW-0408">Iron</keyword>
<keyword id="KW-0479">Metal-binding</keyword>
<keyword id="KW-0574">Periplasm</keyword>
<keyword id="KW-0732">Signal</keyword>
<keyword id="KW-0813">Transport</keyword>
<dbReference type="EMBL" id="AL513382">
    <property type="protein sequence ID" value="CAD06899.1"/>
    <property type="molecule type" value="Genomic_DNA"/>
</dbReference>
<dbReference type="EMBL" id="AE014613">
    <property type="protein sequence ID" value="AAO71920.1"/>
    <property type="molecule type" value="Genomic_DNA"/>
</dbReference>
<dbReference type="RefSeq" id="NP_458856.1">
    <property type="nucleotide sequence ID" value="NC_003198.1"/>
</dbReference>
<dbReference type="RefSeq" id="WP_001232231.1">
    <property type="nucleotide sequence ID" value="NZ_WSUR01000016.1"/>
</dbReference>
<dbReference type="SMR" id="P63728"/>
<dbReference type="STRING" id="220341.gene:17588599"/>
<dbReference type="KEGG" id="stt:t4473"/>
<dbReference type="KEGG" id="sty:STY4778"/>
<dbReference type="PATRIC" id="fig|220341.7.peg.4882"/>
<dbReference type="eggNOG" id="COG3783">
    <property type="taxonomic scope" value="Bacteria"/>
</dbReference>
<dbReference type="HOGENOM" id="CLU_140814_1_1_6"/>
<dbReference type="OMA" id="ATRNENH"/>
<dbReference type="OrthoDB" id="6539015at2"/>
<dbReference type="Proteomes" id="UP000000541">
    <property type="component" value="Chromosome"/>
</dbReference>
<dbReference type="Proteomes" id="UP000002670">
    <property type="component" value="Chromosome"/>
</dbReference>
<dbReference type="GO" id="GO:0042597">
    <property type="term" value="C:periplasmic space"/>
    <property type="evidence" value="ECO:0007669"/>
    <property type="project" value="UniProtKB-SubCell"/>
</dbReference>
<dbReference type="GO" id="GO:0009055">
    <property type="term" value="F:electron transfer activity"/>
    <property type="evidence" value="ECO:0007669"/>
    <property type="project" value="InterPro"/>
</dbReference>
<dbReference type="GO" id="GO:0020037">
    <property type="term" value="F:heme binding"/>
    <property type="evidence" value="ECO:0007669"/>
    <property type="project" value="InterPro"/>
</dbReference>
<dbReference type="GO" id="GO:0005506">
    <property type="term" value="F:iron ion binding"/>
    <property type="evidence" value="ECO:0007669"/>
    <property type="project" value="InterPro"/>
</dbReference>
<dbReference type="GO" id="GO:0022900">
    <property type="term" value="P:electron transport chain"/>
    <property type="evidence" value="ECO:0007669"/>
    <property type="project" value="InterPro"/>
</dbReference>
<dbReference type="Gene3D" id="1.20.120.10">
    <property type="entry name" value="Cytochrome c/b562"/>
    <property type="match status" value="1"/>
</dbReference>
<dbReference type="InterPro" id="IPR009155">
    <property type="entry name" value="Cyt_b562"/>
</dbReference>
<dbReference type="InterPro" id="IPR010980">
    <property type="entry name" value="Cyt_c/b562"/>
</dbReference>
<dbReference type="NCBIfam" id="NF011632">
    <property type="entry name" value="PRK15058.1"/>
    <property type="match status" value="1"/>
</dbReference>
<dbReference type="Pfam" id="PF07361">
    <property type="entry name" value="Cytochrom_B562"/>
    <property type="match status" value="1"/>
</dbReference>
<dbReference type="PIRSF" id="PIRSF000029">
    <property type="entry name" value="Cytochrome_b562"/>
    <property type="match status" value="1"/>
</dbReference>
<dbReference type="SUPFAM" id="SSF47175">
    <property type="entry name" value="Cytochromes"/>
    <property type="match status" value="1"/>
</dbReference>
<protein>
    <recommendedName>
        <fullName>Soluble cytochrome b562</fullName>
        <shortName>Cytochrome b-562</shortName>
    </recommendedName>
</protein>
<sequence>MRKSLLAILAVSSLVFGSAVFAADLEDNMDILNDNLKVVEKTDSAPELKAALTKMRAAALDAQKATPPKLEDKAPDSPEMKDFRHGFDILVGQIDGALKLANEGNVKEAKAAAEALKTTRNTYHKKYR</sequence>
<organism>
    <name type="scientific">Salmonella typhi</name>
    <dbReference type="NCBI Taxonomy" id="90370"/>
    <lineage>
        <taxon>Bacteria</taxon>
        <taxon>Pseudomonadati</taxon>
        <taxon>Pseudomonadota</taxon>
        <taxon>Gammaproteobacteria</taxon>
        <taxon>Enterobacterales</taxon>
        <taxon>Enterobacteriaceae</taxon>
        <taxon>Salmonella</taxon>
    </lineage>
</organism>
<reference key="1">
    <citation type="journal article" date="2001" name="Nature">
        <title>Complete genome sequence of a multiple drug resistant Salmonella enterica serovar Typhi CT18.</title>
        <authorList>
            <person name="Parkhill J."/>
            <person name="Dougan G."/>
            <person name="James K.D."/>
            <person name="Thomson N.R."/>
            <person name="Pickard D."/>
            <person name="Wain J."/>
            <person name="Churcher C.M."/>
            <person name="Mungall K.L."/>
            <person name="Bentley S.D."/>
            <person name="Holden M.T.G."/>
            <person name="Sebaihia M."/>
            <person name="Baker S."/>
            <person name="Basham D."/>
            <person name="Brooks K."/>
            <person name="Chillingworth T."/>
            <person name="Connerton P."/>
            <person name="Cronin A."/>
            <person name="Davis P."/>
            <person name="Davies R.M."/>
            <person name="Dowd L."/>
            <person name="White N."/>
            <person name="Farrar J."/>
            <person name="Feltwell T."/>
            <person name="Hamlin N."/>
            <person name="Haque A."/>
            <person name="Hien T.T."/>
            <person name="Holroyd S."/>
            <person name="Jagels K."/>
            <person name="Krogh A."/>
            <person name="Larsen T.S."/>
            <person name="Leather S."/>
            <person name="Moule S."/>
            <person name="O'Gaora P."/>
            <person name="Parry C."/>
            <person name="Quail M.A."/>
            <person name="Rutherford K.M."/>
            <person name="Simmonds M."/>
            <person name="Skelton J."/>
            <person name="Stevens K."/>
            <person name="Whitehead S."/>
            <person name="Barrell B.G."/>
        </authorList>
    </citation>
    <scope>NUCLEOTIDE SEQUENCE [LARGE SCALE GENOMIC DNA]</scope>
    <source>
        <strain>CT18</strain>
    </source>
</reference>
<reference key="2">
    <citation type="journal article" date="2003" name="J. Bacteriol.">
        <title>Comparative genomics of Salmonella enterica serovar Typhi strains Ty2 and CT18.</title>
        <authorList>
            <person name="Deng W."/>
            <person name="Liou S.-R."/>
            <person name="Plunkett G. III"/>
            <person name="Mayhew G.F."/>
            <person name="Rose D.J."/>
            <person name="Burland V."/>
            <person name="Kodoyianni V."/>
            <person name="Schwartz D.C."/>
            <person name="Blattner F.R."/>
        </authorList>
    </citation>
    <scope>NUCLEOTIDE SEQUENCE [LARGE SCALE GENOMIC DNA]</scope>
    <source>
        <strain>ATCC 700931 / Ty2</strain>
    </source>
</reference>
<proteinExistence type="inferred from homology"/>
<comment type="function">
    <text evidence="1">Electron-transport protein of unknown function.</text>
</comment>
<comment type="cofactor">
    <cofactor evidence="1">
        <name>heme b</name>
        <dbReference type="ChEBI" id="CHEBI:60344"/>
    </cofactor>
    <text evidence="1">Binds 1 heme b (iron(II)-protoporphyrin IX) group per molecule.</text>
</comment>
<comment type="subcellular location">
    <subcellularLocation>
        <location evidence="1">Periplasm</location>
    </subcellularLocation>
</comment>
<comment type="similarity">
    <text evidence="2">Belongs to the cytochrome b562 family.</text>
</comment>